<accession>Q5Z922</accession>
<accession>A0A0P0WXZ5</accession>
<feature type="chain" id="PRO_0000415901" description="Solute carrier family 40 member 1">
    <location>
        <begin position="1"/>
        <end position="484"/>
    </location>
</feature>
<feature type="transmembrane region" description="Helical" evidence="2">
    <location>
        <begin position="58"/>
        <end position="78"/>
    </location>
</feature>
<feature type="transmembrane region" description="Helical" evidence="2">
    <location>
        <begin position="94"/>
        <end position="114"/>
    </location>
</feature>
<feature type="transmembrane region" description="Helical" evidence="2">
    <location>
        <begin position="123"/>
        <end position="143"/>
    </location>
</feature>
<feature type="transmembrane region" description="Helical" evidence="2">
    <location>
        <begin position="189"/>
        <end position="209"/>
    </location>
</feature>
<feature type="transmembrane region" description="Helical" evidence="2">
    <location>
        <begin position="212"/>
        <end position="232"/>
    </location>
</feature>
<feature type="transmembrane region" description="Helical" evidence="2">
    <location>
        <begin position="279"/>
        <end position="299"/>
    </location>
</feature>
<feature type="transmembrane region" description="Helical" evidence="2">
    <location>
        <begin position="308"/>
        <end position="328"/>
    </location>
</feature>
<feature type="transmembrane region" description="Helical" evidence="2">
    <location>
        <begin position="346"/>
        <end position="366"/>
    </location>
</feature>
<feature type="transmembrane region" description="Helical" evidence="2">
    <location>
        <begin position="377"/>
        <end position="397"/>
    </location>
</feature>
<feature type="transmembrane region" description="Helical" evidence="2">
    <location>
        <begin position="413"/>
        <end position="433"/>
    </location>
</feature>
<feature type="transmembrane region" description="Helical" evidence="2">
    <location>
        <begin position="442"/>
        <end position="462"/>
    </location>
</feature>
<evidence type="ECO:0000250" key="1"/>
<evidence type="ECO:0000255" key="2"/>
<evidence type="ECO:0000305" key="3"/>
<dbReference type="EMBL" id="AP003713">
    <property type="protein sequence ID" value="BAD53732.1"/>
    <property type="molecule type" value="Genomic_DNA"/>
</dbReference>
<dbReference type="EMBL" id="AP008212">
    <property type="protein sequence ID" value="BAF19781.1"/>
    <property type="molecule type" value="Genomic_DNA"/>
</dbReference>
<dbReference type="EMBL" id="AP014962">
    <property type="protein sequence ID" value="BAS98244.1"/>
    <property type="molecule type" value="Genomic_DNA"/>
</dbReference>
<dbReference type="EMBL" id="AK063490">
    <property type="protein sequence ID" value="BAG88730.1"/>
    <property type="molecule type" value="mRNA"/>
</dbReference>
<dbReference type="EMBL" id="AK101863">
    <property type="protein sequence ID" value="BAG95262.1"/>
    <property type="molecule type" value="mRNA"/>
</dbReference>
<dbReference type="RefSeq" id="XP_015641654.1">
    <property type="nucleotide sequence ID" value="XM_015786168.1"/>
</dbReference>
<dbReference type="SMR" id="Q5Z922"/>
<dbReference type="FunCoup" id="Q5Z922">
    <property type="interactions" value="260"/>
</dbReference>
<dbReference type="STRING" id="39947.Q5Z922"/>
<dbReference type="PaxDb" id="39947-Q5Z922"/>
<dbReference type="EnsemblPlants" id="Os06t0560000-01">
    <property type="protein sequence ID" value="Os06t0560000-01"/>
    <property type="gene ID" value="Os06g0560000"/>
</dbReference>
<dbReference type="EnsemblPlants" id="Os06t0560000-02">
    <property type="protein sequence ID" value="Os06t0560000-02"/>
    <property type="gene ID" value="Os06g0560000"/>
</dbReference>
<dbReference type="Gramene" id="Os06t0560000-01">
    <property type="protein sequence ID" value="Os06t0560000-01"/>
    <property type="gene ID" value="Os06g0560000"/>
</dbReference>
<dbReference type="Gramene" id="Os06t0560000-02">
    <property type="protein sequence ID" value="Os06t0560000-02"/>
    <property type="gene ID" value="Os06g0560000"/>
</dbReference>
<dbReference type="KEGG" id="dosa:Os06g0560000"/>
<dbReference type="eggNOG" id="KOG2601">
    <property type="taxonomic scope" value="Eukaryota"/>
</dbReference>
<dbReference type="HOGENOM" id="CLU_020370_1_0_1"/>
<dbReference type="InParanoid" id="Q5Z922"/>
<dbReference type="OMA" id="VAMGHVM"/>
<dbReference type="OrthoDB" id="648861at2759"/>
<dbReference type="Proteomes" id="UP000000763">
    <property type="component" value="Chromosome 6"/>
</dbReference>
<dbReference type="Proteomes" id="UP000059680">
    <property type="component" value="Chromosome 6"/>
</dbReference>
<dbReference type="GO" id="GO:0016020">
    <property type="term" value="C:membrane"/>
    <property type="evidence" value="ECO:0007669"/>
    <property type="project" value="UniProtKB-SubCell"/>
</dbReference>
<dbReference type="GO" id="GO:0005381">
    <property type="term" value="F:iron ion transmembrane transporter activity"/>
    <property type="evidence" value="ECO:0007669"/>
    <property type="project" value="InterPro"/>
</dbReference>
<dbReference type="GO" id="GO:0006826">
    <property type="term" value="P:iron ion transport"/>
    <property type="evidence" value="ECO:0000318"/>
    <property type="project" value="GO_Central"/>
</dbReference>
<dbReference type="CDD" id="cd17480">
    <property type="entry name" value="MFS_SLC40A1_like"/>
    <property type="match status" value="1"/>
</dbReference>
<dbReference type="FunFam" id="1.20.1250.20:FF:000441">
    <property type="entry name" value="Solute carrier family 40 protein"/>
    <property type="match status" value="1"/>
</dbReference>
<dbReference type="Gene3D" id="1.20.1250.20">
    <property type="entry name" value="MFS general substrate transporter like domains"/>
    <property type="match status" value="1"/>
</dbReference>
<dbReference type="InterPro" id="IPR009716">
    <property type="entry name" value="Ferroportin-1"/>
</dbReference>
<dbReference type="InterPro" id="IPR036259">
    <property type="entry name" value="MFS_trans_sf"/>
</dbReference>
<dbReference type="PANTHER" id="PTHR11660">
    <property type="entry name" value="SOLUTE CARRIER FAMILY 40 MEMBER"/>
    <property type="match status" value="1"/>
</dbReference>
<dbReference type="PANTHER" id="PTHR11660:SF57">
    <property type="entry name" value="SOLUTE CARRIER FAMILY 40 MEMBER"/>
    <property type="match status" value="1"/>
</dbReference>
<dbReference type="Pfam" id="PF06963">
    <property type="entry name" value="FPN1"/>
    <property type="match status" value="1"/>
</dbReference>
<dbReference type="SUPFAM" id="SSF103473">
    <property type="entry name" value="MFS general substrate transporter"/>
    <property type="match status" value="1"/>
</dbReference>
<gene>
    <name type="ordered locus">Os06g0560000</name>
    <name type="ordered locus">LOC_Os06g36450</name>
    <name type="ORF">P0528E12.13</name>
</gene>
<reference key="1">
    <citation type="journal article" date="2005" name="Nature">
        <title>The map-based sequence of the rice genome.</title>
        <authorList>
            <consortium name="International rice genome sequencing project (IRGSP)"/>
        </authorList>
    </citation>
    <scope>NUCLEOTIDE SEQUENCE [LARGE SCALE GENOMIC DNA]</scope>
    <source>
        <strain>cv. Nipponbare</strain>
    </source>
</reference>
<reference key="2">
    <citation type="journal article" date="2008" name="Nucleic Acids Res.">
        <title>The rice annotation project database (RAP-DB): 2008 update.</title>
        <authorList>
            <consortium name="The rice annotation project (RAP)"/>
        </authorList>
    </citation>
    <scope>GENOME REANNOTATION</scope>
    <source>
        <strain>cv. Nipponbare</strain>
    </source>
</reference>
<reference key="3">
    <citation type="journal article" date="2013" name="Rice">
        <title>Improvement of the Oryza sativa Nipponbare reference genome using next generation sequence and optical map data.</title>
        <authorList>
            <person name="Kawahara Y."/>
            <person name="de la Bastide M."/>
            <person name="Hamilton J.P."/>
            <person name="Kanamori H."/>
            <person name="McCombie W.R."/>
            <person name="Ouyang S."/>
            <person name="Schwartz D.C."/>
            <person name="Tanaka T."/>
            <person name="Wu J."/>
            <person name="Zhou S."/>
            <person name="Childs K.L."/>
            <person name="Davidson R.M."/>
            <person name="Lin H."/>
            <person name="Quesada-Ocampo L."/>
            <person name="Vaillancourt B."/>
            <person name="Sakai H."/>
            <person name="Lee S.S."/>
            <person name="Kim J."/>
            <person name="Numa H."/>
            <person name="Itoh T."/>
            <person name="Buell C.R."/>
            <person name="Matsumoto T."/>
        </authorList>
    </citation>
    <scope>GENOME REANNOTATION</scope>
    <source>
        <strain>cv. Nipponbare</strain>
    </source>
</reference>
<reference key="4">
    <citation type="journal article" date="2003" name="Science">
        <title>Collection, mapping, and annotation of over 28,000 cDNA clones from japonica rice.</title>
        <authorList>
            <consortium name="The rice full-length cDNA consortium"/>
        </authorList>
    </citation>
    <scope>NUCLEOTIDE SEQUENCE [LARGE SCALE MRNA]</scope>
    <source>
        <strain>cv. Nipponbare</strain>
    </source>
</reference>
<sequence length="484" mass="52015">MASDGHLAAPLLDGGGGVDDAALLRRLYVGHFLARWGARMWEFSVGLYMIRIWPGSLLLTAVYGVVEASAVAALGPIVGAVVDRLAYLQVLRLWLLLQGASFVAAGVSVTALLVYGARLAAAGFPAFVALVVVTNVSGALAALSTLAGTILIEREWVVVIAGGQPAAVLTGINSVIRRIDLSCKLLAPVLSGFFISFVSMEASAAALAAWNLAAVWVQYWLFVSVYAGFPALSETSQISRRRADDDEAAAAAQPQKVERLWMTMLPCWESWAVYARQEVVLPGVALAFLYFTVLSFGTLMTATLDWEGIPAYVISLARGVSAAVGIAATWVYPAAHARVSTLRAGLWSIWAQWCCLLVCVASVWAGGAAPLASAWMLMGGVAASRLGLWMFDLAVMQLMQDGVPESDRCVVGGVQNSLQSMFDLLTYVMGIIVSDPRDFGELIVLSFFLVTCAAAMYTMHVYRVRKHLFHLDRILPKMNWIKAS</sequence>
<name>S40A1_ORYSJ</name>
<comment type="function">
    <text evidence="1">May be involved in iron transport and iron homeostasis.</text>
</comment>
<comment type="subcellular location">
    <subcellularLocation>
        <location evidence="3">Membrane</location>
        <topology evidence="3">Multi-pass membrane protein</topology>
    </subcellularLocation>
</comment>
<comment type="similarity">
    <text evidence="3">Belongs to the ferroportin (FP) (TC 2.A.100) family. SLC40A subfamily.</text>
</comment>
<protein>
    <recommendedName>
        <fullName>Solute carrier family 40 member 1</fullName>
    </recommendedName>
</protein>
<organism>
    <name type="scientific">Oryza sativa subsp. japonica</name>
    <name type="common">Rice</name>
    <dbReference type="NCBI Taxonomy" id="39947"/>
    <lineage>
        <taxon>Eukaryota</taxon>
        <taxon>Viridiplantae</taxon>
        <taxon>Streptophyta</taxon>
        <taxon>Embryophyta</taxon>
        <taxon>Tracheophyta</taxon>
        <taxon>Spermatophyta</taxon>
        <taxon>Magnoliopsida</taxon>
        <taxon>Liliopsida</taxon>
        <taxon>Poales</taxon>
        <taxon>Poaceae</taxon>
        <taxon>BOP clade</taxon>
        <taxon>Oryzoideae</taxon>
        <taxon>Oryzeae</taxon>
        <taxon>Oryzinae</taxon>
        <taxon>Oryza</taxon>
        <taxon>Oryza sativa</taxon>
    </lineage>
</organism>
<keyword id="KW-0406">Ion transport</keyword>
<keyword id="KW-0472">Membrane</keyword>
<keyword id="KW-1185">Reference proteome</keyword>
<keyword id="KW-0812">Transmembrane</keyword>
<keyword id="KW-1133">Transmembrane helix</keyword>
<keyword id="KW-0813">Transport</keyword>
<proteinExistence type="evidence at transcript level"/>